<sequence length="243" mass="26306">MSSIYLGVNIDHVATLRNARGTKYPDPVHAAEVAERAGADGITIHLREDRRHITDRDVRILRETLQTRMNLEMAVTDEMIEIALKTQPEYVCLVPEKREELTTEGGLDVAGHLDKIKAATEKLTAAGIKVSLFIDADREQIDAAKACGAPFIELHTGHYADAATEADQLDELKKIAAGASYAADLGITVNAGHGLTYHNVAPIAALPEIYELNIGHAIIGRAVFDGLHKAVADMKAIMVAARQ</sequence>
<keyword id="KW-0963">Cytoplasm</keyword>
<keyword id="KW-0664">Pyridoxine biosynthesis</keyword>
<keyword id="KW-0808">Transferase</keyword>
<proteinExistence type="inferred from homology"/>
<dbReference type="EC" id="2.6.99.2" evidence="1"/>
<dbReference type="EMBL" id="AE016795">
    <property type="protein sequence ID" value="AAO09992.1"/>
    <property type="molecule type" value="Genomic_DNA"/>
</dbReference>
<dbReference type="RefSeq" id="WP_011079503.1">
    <property type="nucleotide sequence ID" value="NC_004459.3"/>
</dbReference>
<dbReference type="SMR" id="Q8DC73"/>
<dbReference type="GeneID" id="93895825"/>
<dbReference type="KEGG" id="vvu:VV1_1568"/>
<dbReference type="HOGENOM" id="CLU_074563_0_0_6"/>
<dbReference type="UniPathway" id="UPA00244">
    <property type="reaction ID" value="UER00313"/>
</dbReference>
<dbReference type="Proteomes" id="UP000002275">
    <property type="component" value="Chromosome 1"/>
</dbReference>
<dbReference type="GO" id="GO:0005829">
    <property type="term" value="C:cytosol"/>
    <property type="evidence" value="ECO:0007669"/>
    <property type="project" value="TreeGrafter"/>
</dbReference>
<dbReference type="GO" id="GO:0033856">
    <property type="term" value="F:pyridoxine 5'-phosphate synthase activity"/>
    <property type="evidence" value="ECO:0007669"/>
    <property type="project" value="UniProtKB-EC"/>
</dbReference>
<dbReference type="GO" id="GO:0008615">
    <property type="term" value="P:pyridoxine biosynthetic process"/>
    <property type="evidence" value="ECO:0007669"/>
    <property type="project" value="UniProtKB-UniRule"/>
</dbReference>
<dbReference type="CDD" id="cd00003">
    <property type="entry name" value="PNPsynthase"/>
    <property type="match status" value="1"/>
</dbReference>
<dbReference type="FunFam" id="3.20.20.70:FF:000042">
    <property type="entry name" value="Pyridoxine 5'-phosphate synthase"/>
    <property type="match status" value="1"/>
</dbReference>
<dbReference type="Gene3D" id="3.20.20.70">
    <property type="entry name" value="Aldolase class I"/>
    <property type="match status" value="1"/>
</dbReference>
<dbReference type="HAMAP" id="MF_00279">
    <property type="entry name" value="PdxJ"/>
    <property type="match status" value="1"/>
</dbReference>
<dbReference type="InterPro" id="IPR013785">
    <property type="entry name" value="Aldolase_TIM"/>
</dbReference>
<dbReference type="InterPro" id="IPR004569">
    <property type="entry name" value="PyrdxlP_synth_PdxJ"/>
</dbReference>
<dbReference type="InterPro" id="IPR036130">
    <property type="entry name" value="Pyridoxine-5'_phos_synth"/>
</dbReference>
<dbReference type="NCBIfam" id="TIGR00559">
    <property type="entry name" value="pdxJ"/>
    <property type="match status" value="1"/>
</dbReference>
<dbReference type="NCBIfam" id="NF003623">
    <property type="entry name" value="PRK05265.1-1"/>
    <property type="match status" value="1"/>
</dbReference>
<dbReference type="NCBIfam" id="NF003624">
    <property type="entry name" value="PRK05265.1-2"/>
    <property type="match status" value="1"/>
</dbReference>
<dbReference type="NCBIfam" id="NF003625">
    <property type="entry name" value="PRK05265.1-3"/>
    <property type="match status" value="1"/>
</dbReference>
<dbReference type="NCBIfam" id="NF003627">
    <property type="entry name" value="PRK05265.1-5"/>
    <property type="match status" value="1"/>
</dbReference>
<dbReference type="PANTHER" id="PTHR30456">
    <property type="entry name" value="PYRIDOXINE 5'-PHOSPHATE SYNTHASE"/>
    <property type="match status" value="1"/>
</dbReference>
<dbReference type="PANTHER" id="PTHR30456:SF0">
    <property type="entry name" value="PYRIDOXINE 5'-PHOSPHATE SYNTHASE"/>
    <property type="match status" value="1"/>
</dbReference>
<dbReference type="Pfam" id="PF03740">
    <property type="entry name" value="PdxJ"/>
    <property type="match status" value="1"/>
</dbReference>
<dbReference type="SUPFAM" id="SSF63892">
    <property type="entry name" value="Pyridoxine 5'-phosphate synthase"/>
    <property type="match status" value="1"/>
</dbReference>
<reference key="1">
    <citation type="submission" date="2002-12" db="EMBL/GenBank/DDBJ databases">
        <title>Complete genome sequence of Vibrio vulnificus CMCP6.</title>
        <authorList>
            <person name="Rhee J.H."/>
            <person name="Kim S.Y."/>
            <person name="Chung S.S."/>
            <person name="Kim J.J."/>
            <person name="Moon Y.H."/>
            <person name="Jeong H."/>
            <person name="Choy H.E."/>
        </authorList>
    </citation>
    <scope>NUCLEOTIDE SEQUENCE [LARGE SCALE GENOMIC DNA]</scope>
    <source>
        <strain>CMCP6</strain>
    </source>
</reference>
<gene>
    <name evidence="1" type="primary">pdxJ</name>
    <name type="ordered locus">VV1_1568</name>
</gene>
<evidence type="ECO:0000255" key="1">
    <source>
        <dbReference type="HAMAP-Rule" id="MF_00279"/>
    </source>
</evidence>
<name>PDXJ_VIBVU</name>
<feature type="chain" id="PRO_0000190137" description="Pyridoxine 5'-phosphate synthase">
    <location>
        <begin position="1"/>
        <end position="243"/>
    </location>
</feature>
<feature type="active site" description="Proton acceptor" evidence="1">
    <location>
        <position position="45"/>
    </location>
</feature>
<feature type="active site" description="Proton acceptor" evidence="1">
    <location>
        <position position="72"/>
    </location>
</feature>
<feature type="active site" description="Proton donor" evidence="1">
    <location>
        <position position="193"/>
    </location>
</feature>
<feature type="binding site" evidence="1">
    <location>
        <position position="9"/>
    </location>
    <ligand>
        <name>3-amino-2-oxopropyl phosphate</name>
        <dbReference type="ChEBI" id="CHEBI:57279"/>
    </ligand>
</feature>
<feature type="binding site" evidence="1">
    <location>
        <begin position="11"/>
        <end position="12"/>
    </location>
    <ligand>
        <name>1-deoxy-D-xylulose 5-phosphate</name>
        <dbReference type="ChEBI" id="CHEBI:57792"/>
    </ligand>
</feature>
<feature type="binding site" evidence="1">
    <location>
        <position position="20"/>
    </location>
    <ligand>
        <name>3-amino-2-oxopropyl phosphate</name>
        <dbReference type="ChEBI" id="CHEBI:57279"/>
    </ligand>
</feature>
<feature type="binding site" evidence="1">
    <location>
        <position position="47"/>
    </location>
    <ligand>
        <name>1-deoxy-D-xylulose 5-phosphate</name>
        <dbReference type="ChEBI" id="CHEBI:57792"/>
    </ligand>
</feature>
<feature type="binding site" evidence="1">
    <location>
        <position position="52"/>
    </location>
    <ligand>
        <name>1-deoxy-D-xylulose 5-phosphate</name>
        <dbReference type="ChEBI" id="CHEBI:57792"/>
    </ligand>
</feature>
<feature type="binding site" evidence="1">
    <location>
        <position position="102"/>
    </location>
    <ligand>
        <name>1-deoxy-D-xylulose 5-phosphate</name>
        <dbReference type="ChEBI" id="CHEBI:57792"/>
    </ligand>
</feature>
<feature type="binding site" evidence="1">
    <location>
        <position position="194"/>
    </location>
    <ligand>
        <name>3-amino-2-oxopropyl phosphate</name>
        <dbReference type="ChEBI" id="CHEBI:57279"/>
    </ligand>
</feature>
<feature type="binding site" evidence="1">
    <location>
        <begin position="215"/>
        <end position="216"/>
    </location>
    <ligand>
        <name>3-amino-2-oxopropyl phosphate</name>
        <dbReference type="ChEBI" id="CHEBI:57279"/>
    </ligand>
</feature>
<feature type="site" description="Transition state stabilizer" evidence="1">
    <location>
        <position position="153"/>
    </location>
</feature>
<organism>
    <name type="scientific">Vibrio vulnificus (strain CMCP6)</name>
    <dbReference type="NCBI Taxonomy" id="216895"/>
    <lineage>
        <taxon>Bacteria</taxon>
        <taxon>Pseudomonadati</taxon>
        <taxon>Pseudomonadota</taxon>
        <taxon>Gammaproteobacteria</taxon>
        <taxon>Vibrionales</taxon>
        <taxon>Vibrionaceae</taxon>
        <taxon>Vibrio</taxon>
    </lineage>
</organism>
<comment type="function">
    <text evidence="1">Catalyzes the complicated ring closure reaction between the two acyclic compounds 1-deoxy-D-xylulose-5-phosphate (DXP) and 3-amino-2-oxopropyl phosphate (1-amino-acetone-3-phosphate or AAP) to form pyridoxine 5'-phosphate (PNP) and inorganic phosphate.</text>
</comment>
<comment type="catalytic activity">
    <reaction evidence="1">
        <text>3-amino-2-oxopropyl phosphate + 1-deoxy-D-xylulose 5-phosphate = pyridoxine 5'-phosphate + phosphate + 2 H2O + H(+)</text>
        <dbReference type="Rhea" id="RHEA:15265"/>
        <dbReference type="ChEBI" id="CHEBI:15377"/>
        <dbReference type="ChEBI" id="CHEBI:15378"/>
        <dbReference type="ChEBI" id="CHEBI:43474"/>
        <dbReference type="ChEBI" id="CHEBI:57279"/>
        <dbReference type="ChEBI" id="CHEBI:57792"/>
        <dbReference type="ChEBI" id="CHEBI:58589"/>
        <dbReference type="EC" id="2.6.99.2"/>
    </reaction>
</comment>
<comment type="pathway">
    <text evidence="1">Cofactor biosynthesis; pyridoxine 5'-phosphate biosynthesis; pyridoxine 5'-phosphate from D-erythrose 4-phosphate: step 5/5.</text>
</comment>
<comment type="subunit">
    <text evidence="1">Homooctamer; tetramer of dimers.</text>
</comment>
<comment type="subcellular location">
    <subcellularLocation>
        <location evidence="1">Cytoplasm</location>
    </subcellularLocation>
</comment>
<comment type="similarity">
    <text evidence="1">Belongs to the PNP synthase family.</text>
</comment>
<protein>
    <recommendedName>
        <fullName evidence="1">Pyridoxine 5'-phosphate synthase</fullName>
        <shortName evidence="1">PNP synthase</shortName>
        <ecNumber evidence="1">2.6.99.2</ecNumber>
    </recommendedName>
</protein>
<accession>Q8DC73</accession>